<gene>
    <name evidence="1" type="primary">cbiD</name>
    <name type="ordered locus">DSY4072</name>
</gene>
<dbReference type="EC" id="2.1.1.195" evidence="1"/>
<dbReference type="EMBL" id="AP008230">
    <property type="protein sequence ID" value="BAE85861.1"/>
    <property type="molecule type" value="Genomic_DNA"/>
</dbReference>
<dbReference type="RefSeq" id="WP_011461551.1">
    <property type="nucleotide sequence ID" value="NC_007907.1"/>
</dbReference>
<dbReference type="SMR" id="Q24Q31"/>
<dbReference type="STRING" id="138119.DSY4072"/>
<dbReference type="KEGG" id="dsy:DSY4072"/>
<dbReference type="eggNOG" id="COG1903">
    <property type="taxonomic scope" value="Bacteria"/>
</dbReference>
<dbReference type="HOGENOM" id="CLU_041273_1_0_9"/>
<dbReference type="UniPathway" id="UPA00148">
    <property type="reaction ID" value="UER00227"/>
</dbReference>
<dbReference type="Proteomes" id="UP000001946">
    <property type="component" value="Chromosome"/>
</dbReference>
<dbReference type="GO" id="GO:0043780">
    <property type="term" value="F:cobalt-precorrin-5B C1-methyltransferase activity"/>
    <property type="evidence" value="ECO:0007669"/>
    <property type="project" value="RHEA"/>
</dbReference>
<dbReference type="GO" id="GO:0019251">
    <property type="term" value="P:anaerobic cobalamin biosynthetic process"/>
    <property type="evidence" value="ECO:0007669"/>
    <property type="project" value="UniProtKB-UniRule"/>
</dbReference>
<dbReference type="GO" id="GO:0032259">
    <property type="term" value="P:methylation"/>
    <property type="evidence" value="ECO:0007669"/>
    <property type="project" value="UniProtKB-KW"/>
</dbReference>
<dbReference type="Gene3D" id="3.30.2110.10">
    <property type="entry name" value="CbiD-like"/>
    <property type="match status" value="1"/>
</dbReference>
<dbReference type="HAMAP" id="MF_00787">
    <property type="entry name" value="CbiD"/>
    <property type="match status" value="1"/>
</dbReference>
<dbReference type="InterPro" id="IPR002748">
    <property type="entry name" value="CbiD"/>
</dbReference>
<dbReference type="InterPro" id="IPR036074">
    <property type="entry name" value="CbiD_sf"/>
</dbReference>
<dbReference type="NCBIfam" id="TIGR00312">
    <property type="entry name" value="cbiD"/>
    <property type="match status" value="1"/>
</dbReference>
<dbReference type="PANTHER" id="PTHR35863">
    <property type="entry name" value="COBALT-PRECORRIN-5B C(1)-METHYLTRANSFERASE"/>
    <property type="match status" value="1"/>
</dbReference>
<dbReference type="PANTHER" id="PTHR35863:SF1">
    <property type="entry name" value="COBALT-PRECORRIN-5B C(1)-METHYLTRANSFERASE"/>
    <property type="match status" value="1"/>
</dbReference>
<dbReference type="Pfam" id="PF01888">
    <property type="entry name" value="CbiD"/>
    <property type="match status" value="1"/>
</dbReference>
<dbReference type="PIRSF" id="PIRSF026782">
    <property type="entry name" value="CbiD"/>
    <property type="match status" value="1"/>
</dbReference>
<dbReference type="SUPFAM" id="SSF111342">
    <property type="entry name" value="CbiD-like"/>
    <property type="match status" value="1"/>
</dbReference>
<evidence type="ECO:0000255" key="1">
    <source>
        <dbReference type="HAMAP-Rule" id="MF_00787"/>
    </source>
</evidence>
<proteinExistence type="inferred from homology"/>
<feature type="chain" id="PRO_0000257760" description="Cobalt-precorrin-5B C(1)-methyltransferase">
    <location>
        <begin position="1"/>
        <end position="387"/>
    </location>
</feature>
<accession>Q24Q31</accession>
<protein>
    <recommendedName>
        <fullName evidence="1">Cobalt-precorrin-5B C(1)-methyltransferase</fullName>
        <ecNumber evidence="1">2.1.1.195</ecNumber>
    </recommendedName>
    <alternativeName>
        <fullName evidence="1">Cobalt-precorrin-6A synthase</fullName>
    </alternativeName>
</protein>
<comment type="function">
    <text evidence="1">Catalyzes the methylation of C-1 in cobalt-precorrin-5B to form cobalt-precorrin-6A.</text>
</comment>
<comment type="catalytic activity">
    <reaction evidence="1">
        <text>Co-precorrin-5B + S-adenosyl-L-methionine = Co-precorrin-6A + S-adenosyl-L-homocysteine</text>
        <dbReference type="Rhea" id="RHEA:26285"/>
        <dbReference type="ChEBI" id="CHEBI:57856"/>
        <dbReference type="ChEBI" id="CHEBI:59789"/>
        <dbReference type="ChEBI" id="CHEBI:60063"/>
        <dbReference type="ChEBI" id="CHEBI:60064"/>
        <dbReference type="EC" id="2.1.1.195"/>
    </reaction>
</comment>
<comment type="pathway">
    <text evidence="1">Cofactor biosynthesis; adenosylcobalamin biosynthesis; cob(II)yrinate a,c-diamide from sirohydrochlorin (anaerobic route): step 6/10.</text>
</comment>
<comment type="similarity">
    <text evidence="1">Belongs to the CbiD family.</text>
</comment>
<reference key="1">
    <citation type="journal article" date="2006" name="J. Bacteriol.">
        <title>Complete genome sequence of the dehalorespiring bacterium Desulfitobacterium hafniense Y51 and comparison with Dehalococcoides ethenogenes 195.</title>
        <authorList>
            <person name="Nonaka H."/>
            <person name="Keresztes G."/>
            <person name="Shinoda Y."/>
            <person name="Ikenaga Y."/>
            <person name="Abe M."/>
            <person name="Naito K."/>
            <person name="Inatomi K."/>
            <person name="Furukawa K."/>
            <person name="Inui M."/>
            <person name="Yukawa H."/>
        </authorList>
    </citation>
    <scope>NUCLEOTIDE SEQUENCE [LARGE SCALE GENOMIC DNA]</scope>
    <source>
        <strain>Y51</strain>
    </source>
</reference>
<keyword id="KW-0169">Cobalamin biosynthesis</keyword>
<keyword id="KW-0489">Methyltransferase</keyword>
<keyword id="KW-1185">Reference proteome</keyword>
<keyword id="KW-0949">S-adenosyl-L-methionine</keyword>
<keyword id="KW-0808">Transferase</keyword>
<sequence length="387" mass="42283">MGGAADMRKKTKDRHSWKTGFTTGSCAAGAAKAACLLLKGLHQGTEVDIPLPQGERLQLPVHRWDRVEDVAWVSIIKNAGDDPDVTHGLEVVARVQLLSQRGEILIRGGRGIGVVTKKGLQIPPGESAINPVPRSMIQAAVREVFPQEEILVVIEVPEGERLALKTLNPRLGIMGGVSILGTTGIVRPMSEEAFKNSILPELDQAVAYGHKAIVLTPGNYGFKVAREQLMVPEEAIIQMSNFVGFLLEEAAYRKIEKVLLLGHIGKLIKVAGGIFHTHTHVADARMEILVAHAALAGMDQNSLQTIAELPTVEGAAEEIRSKGWGSLLFKLAERASHRAQDHVHGELQVGTAFTLLNGEIIAWDDPAMEIGKEFWHWPPVEEEFWRK</sequence>
<name>CBID_DESHY</name>
<organism>
    <name type="scientific">Desulfitobacterium hafniense (strain Y51)</name>
    <dbReference type="NCBI Taxonomy" id="138119"/>
    <lineage>
        <taxon>Bacteria</taxon>
        <taxon>Bacillati</taxon>
        <taxon>Bacillota</taxon>
        <taxon>Clostridia</taxon>
        <taxon>Eubacteriales</taxon>
        <taxon>Desulfitobacteriaceae</taxon>
        <taxon>Desulfitobacterium</taxon>
    </lineage>
</organism>